<organism>
    <name type="scientific">Trichodesmium erythraeum (strain IMS101)</name>
    <dbReference type="NCBI Taxonomy" id="203124"/>
    <lineage>
        <taxon>Bacteria</taxon>
        <taxon>Bacillati</taxon>
        <taxon>Cyanobacteriota</taxon>
        <taxon>Cyanophyceae</taxon>
        <taxon>Oscillatoriophycideae</taxon>
        <taxon>Oscillatoriales</taxon>
        <taxon>Microcoleaceae</taxon>
        <taxon>Trichodesmium</taxon>
    </lineage>
</organism>
<name>RS14_TRIEI</name>
<feature type="chain" id="PRO_1000128623" description="Small ribosomal subunit protein uS14">
    <location>
        <begin position="1"/>
        <end position="100"/>
    </location>
</feature>
<gene>
    <name evidence="1" type="primary">rpsN</name>
    <name evidence="1" type="synonym">rps14</name>
    <name type="ordered locus">Tery_3270</name>
</gene>
<sequence length="100" mass="12066">MAKKSMIEREKKRKKLVEKYAEKRRELKEQFMKAEDLEQKIELHRQIQRLPRNSAPSRVRNRCWLTGRPRGFYRDFGLSRNVIREMAHEGLLPGVVKSSW</sequence>
<evidence type="ECO:0000255" key="1">
    <source>
        <dbReference type="HAMAP-Rule" id="MF_00537"/>
    </source>
</evidence>
<evidence type="ECO:0000305" key="2"/>
<protein>
    <recommendedName>
        <fullName evidence="1">Small ribosomal subunit protein uS14</fullName>
    </recommendedName>
    <alternativeName>
        <fullName evidence="2">30S ribosomal protein S14</fullName>
    </alternativeName>
</protein>
<accession>Q10ZE2</accession>
<comment type="function">
    <text evidence="1">Binds 16S rRNA, required for the assembly of 30S particles and may also be responsible for determining the conformation of the 16S rRNA at the A site.</text>
</comment>
<comment type="subunit">
    <text evidence="1">Part of the 30S ribosomal subunit. Contacts proteins S3 and S10.</text>
</comment>
<comment type="similarity">
    <text evidence="1">Belongs to the universal ribosomal protein uS14 family.</text>
</comment>
<keyword id="KW-0687">Ribonucleoprotein</keyword>
<keyword id="KW-0689">Ribosomal protein</keyword>
<keyword id="KW-0694">RNA-binding</keyword>
<keyword id="KW-0699">rRNA-binding</keyword>
<dbReference type="EMBL" id="CP000393">
    <property type="protein sequence ID" value="ABG52382.1"/>
    <property type="molecule type" value="Genomic_DNA"/>
</dbReference>
<dbReference type="RefSeq" id="WP_011612727.1">
    <property type="nucleotide sequence ID" value="NC_008312.1"/>
</dbReference>
<dbReference type="SMR" id="Q10ZE2"/>
<dbReference type="STRING" id="203124.Tery_3270"/>
<dbReference type="KEGG" id="ter:Tery_3270"/>
<dbReference type="eggNOG" id="COG0199">
    <property type="taxonomic scope" value="Bacteria"/>
</dbReference>
<dbReference type="HOGENOM" id="CLU_139869_0_1_3"/>
<dbReference type="OrthoDB" id="9810484at2"/>
<dbReference type="GO" id="GO:0005737">
    <property type="term" value="C:cytoplasm"/>
    <property type="evidence" value="ECO:0007669"/>
    <property type="project" value="UniProtKB-ARBA"/>
</dbReference>
<dbReference type="GO" id="GO:0015935">
    <property type="term" value="C:small ribosomal subunit"/>
    <property type="evidence" value="ECO:0007669"/>
    <property type="project" value="TreeGrafter"/>
</dbReference>
<dbReference type="GO" id="GO:0019843">
    <property type="term" value="F:rRNA binding"/>
    <property type="evidence" value="ECO:0007669"/>
    <property type="project" value="UniProtKB-UniRule"/>
</dbReference>
<dbReference type="GO" id="GO:0003735">
    <property type="term" value="F:structural constituent of ribosome"/>
    <property type="evidence" value="ECO:0007669"/>
    <property type="project" value="InterPro"/>
</dbReference>
<dbReference type="GO" id="GO:0006412">
    <property type="term" value="P:translation"/>
    <property type="evidence" value="ECO:0007669"/>
    <property type="project" value="UniProtKB-UniRule"/>
</dbReference>
<dbReference type="FunFam" id="1.10.287.1480:FF:000001">
    <property type="entry name" value="30S ribosomal protein S14"/>
    <property type="match status" value="1"/>
</dbReference>
<dbReference type="Gene3D" id="1.10.287.1480">
    <property type="match status" value="1"/>
</dbReference>
<dbReference type="HAMAP" id="MF_00537">
    <property type="entry name" value="Ribosomal_uS14_1"/>
    <property type="match status" value="1"/>
</dbReference>
<dbReference type="InterPro" id="IPR001209">
    <property type="entry name" value="Ribosomal_uS14"/>
</dbReference>
<dbReference type="InterPro" id="IPR023036">
    <property type="entry name" value="Ribosomal_uS14_bac/plastid"/>
</dbReference>
<dbReference type="InterPro" id="IPR018271">
    <property type="entry name" value="Ribosomal_uS14_CS"/>
</dbReference>
<dbReference type="NCBIfam" id="NF006477">
    <property type="entry name" value="PRK08881.1"/>
    <property type="match status" value="1"/>
</dbReference>
<dbReference type="PANTHER" id="PTHR19836">
    <property type="entry name" value="30S RIBOSOMAL PROTEIN S14"/>
    <property type="match status" value="1"/>
</dbReference>
<dbReference type="PANTHER" id="PTHR19836:SF19">
    <property type="entry name" value="SMALL RIBOSOMAL SUBUNIT PROTEIN US14M"/>
    <property type="match status" value="1"/>
</dbReference>
<dbReference type="Pfam" id="PF00253">
    <property type="entry name" value="Ribosomal_S14"/>
    <property type="match status" value="1"/>
</dbReference>
<dbReference type="SUPFAM" id="SSF57716">
    <property type="entry name" value="Glucocorticoid receptor-like (DNA-binding domain)"/>
    <property type="match status" value="1"/>
</dbReference>
<dbReference type="PROSITE" id="PS00527">
    <property type="entry name" value="RIBOSOMAL_S14"/>
    <property type="match status" value="1"/>
</dbReference>
<reference key="1">
    <citation type="journal article" date="2015" name="Proc. Natl. Acad. Sci. U.S.A.">
        <title>Trichodesmium genome maintains abundant, widespread noncoding DNA in situ, despite oligotrophic lifestyle.</title>
        <authorList>
            <person name="Walworth N."/>
            <person name="Pfreundt U."/>
            <person name="Nelson W.C."/>
            <person name="Mincer T."/>
            <person name="Heidelberg J.F."/>
            <person name="Fu F."/>
            <person name="Waterbury J.B."/>
            <person name="Glavina del Rio T."/>
            <person name="Goodwin L."/>
            <person name="Kyrpides N.C."/>
            <person name="Land M.L."/>
            <person name="Woyke T."/>
            <person name="Hutchins D.A."/>
            <person name="Hess W.R."/>
            <person name="Webb E.A."/>
        </authorList>
    </citation>
    <scope>NUCLEOTIDE SEQUENCE [LARGE SCALE GENOMIC DNA]</scope>
    <source>
        <strain>IMS101</strain>
    </source>
</reference>
<proteinExistence type="inferred from homology"/>